<feature type="signal peptide" evidence="2">
    <location>
        <begin position="1"/>
        <end position="20"/>
    </location>
</feature>
<feature type="propeptide" id="PRO_0000418029" evidence="1">
    <location>
        <begin position="21"/>
        <end position="196"/>
    </location>
</feature>
<feature type="chain" id="PRO_0000418030" description="Zinc metalloproteinase-disintegrin-like atrase-A">
    <location>
        <begin position="197"/>
        <end position="607"/>
    </location>
</feature>
<feature type="domain" description="Peptidase M12B" evidence="4">
    <location>
        <begin position="205"/>
        <end position="398"/>
    </location>
</feature>
<feature type="domain" description="Disintegrin" evidence="3">
    <location>
        <begin position="406"/>
        <end position="492"/>
    </location>
</feature>
<feature type="short sequence motif" description="D/ECD-tripeptide">
    <location>
        <begin position="470"/>
        <end position="472"/>
    </location>
</feature>
<feature type="binding site" evidence="1">
    <location>
        <position position="208"/>
    </location>
    <ligand>
        <name>Ca(2+)</name>
        <dbReference type="ChEBI" id="CHEBI:29108"/>
        <label>1</label>
    </ligand>
</feature>
<feature type="binding site" evidence="1">
    <location>
        <position position="290"/>
    </location>
    <ligand>
        <name>Ca(2+)</name>
        <dbReference type="ChEBI" id="CHEBI:29108"/>
        <label>1</label>
    </ligand>
</feature>
<feature type="binding site" evidence="1">
    <location>
        <position position="338"/>
    </location>
    <ligand>
        <name>Zn(2+)</name>
        <dbReference type="ChEBI" id="CHEBI:29105"/>
        <note>catalytic</note>
    </ligand>
</feature>
<feature type="binding site" evidence="1">
    <location>
        <position position="342"/>
    </location>
    <ligand>
        <name>Zn(2+)</name>
        <dbReference type="ChEBI" id="CHEBI:29105"/>
        <note>catalytic</note>
    </ligand>
</feature>
<feature type="binding site" evidence="1">
    <location>
        <position position="348"/>
    </location>
    <ligand>
        <name>Zn(2+)</name>
        <dbReference type="ChEBI" id="CHEBI:29105"/>
        <note>catalytic</note>
    </ligand>
</feature>
<feature type="binding site" evidence="1">
    <location>
        <position position="393"/>
    </location>
    <ligand>
        <name>Ca(2+)</name>
        <dbReference type="ChEBI" id="CHEBI:29108"/>
        <label>1</label>
    </ligand>
</feature>
<feature type="binding site" evidence="1">
    <location>
        <position position="396"/>
    </location>
    <ligand>
        <name>Ca(2+)</name>
        <dbReference type="ChEBI" id="CHEBI:29108"/>
        <label>1</label>
    </ligand>
</feature>
<feature type="binding site" evidence="1">
    <location>
        <position position="411"/>
    </location>
    <ligand>
        <name>Ca(2+)</name>
        <dbReference type="ChEBI" id="CHEBI:29108"/>
        <label>2</label>
    </ligand>
</feature>
<feature type="binding site" evidence="1">
    <location>
        <position position="413"/>
    </location>
    <ligand>
        <name>Ca(2+)</name>
        <dbReference type="ChEBI" id="CHEBI:29108"/>
        <label>2</label>
    </ligand>
</feature>
<feature type="binding site" evidence="1">
    <location>
        <position position="415"/>
    </location>
    <ligand>
        <name>Ca(2+)</name>
        <dbReference type="ChEBI" id="CHEBI:29108"/>
        <label>2</label>
    </ligand>
</feature>
<feature type="binding site" evidence="1">
    <location>
        <position position="418"/>
    </location>
    <ligand>
        <name>Ca(2+)</name>
        <dbReference type="ChEBI" id="CHEBI:29108"/>
        <label>2</label>
    </ligand>
</feature>
<feature type="binding site" evidence="1">
    <location>
        <position position="421"/>
    </location>
    <ligand>
        <name>Ca(2+)</name>
        <dbReference type="ChEBI" id="CHEBI:29108"/>
        <label>2</label>
    </ligand>
</feature>
<feature type="binding site" evidence="1">
    <location>
        <position position="472"/>
    </location>
    <ligand>
        <name>Ca(2+)</name>
        <dbReference type="ChEBI" id="CHEBI:29108"/>
        <label>3</label>
    </ligand>
</feature>
<feature type="binding site" evidence="1">
    <location>
        <position position="473"/>
    </location>
    <ligand>
        <name>Ca(2+)</name>
        <dbReference type="ChEBI" id="CHEBI:29108"/>
        <label>3</label>
    </ligand>
</feature>
<feature type="binding site" evidence="1">
    <location>
        <position position="475"/>
    </location>
    <ligand>
        <name>Ca(2+)</name>
        <dbReference type="ChEBI" id="CHEBI:29108"/>
        <label>3</label>
    </ligand>
</feature>
<feature type="binding site" evidence="1">
    <location>
        <position position="487"/>
    </location>
    <ligand>
        <name>Ca(2+)</name>
        <dbReference type="ChEBI" id="CHEBI:29108"/>
        <label>3</label>
    </ligand>
</feature>
<feature type="binding site" evidence="1">
    <location>
        <position position="488"/>
    </location>
    <ligand>
        <name>Ca(2+)</name>
        <dbReference type="ChEBI" id="CHEBI:29108"/>
        <label>3</label>
    </ligand>
</feature>
<feature type="glycosylation site" description="N-linked (GlcNAc...) asparagine" evidence="2">
    <location>
        <position position="220"/>
    </location>
</feature>
<feature type="glycosylation site" description="N-linked (GlcNAc...) asparagine" evidence="2">
    <location>
        <position position="270"/>
    </location>
</feature>
<feature type="glycosylation site" description="N-linked (GlcNAc...) asparagine" evidence="2">
    <location>
        <position position="301"/>
    </location>
</feature>
<feature type="glycosylation site" description="N-linked (GlcNAc...) asparagine" evidence="2">
    <location>
        <position position="434"/>
    </location>
</feature>
<feature type="glycosylation site" description="N-linked (GlcNAc...) asparagine" evidence="2">
    <location>
        <position position="522"/>
    </location>
</feature>
<feature type="disulfide bond" evidence="1">
    <location>
        <begin position="314"/>
        <end position="393"/>
    </location>
</feature>
<feature type="disulfide bond" evidence="1">
    <location>
        <begin position="353"/>
        <end position="377"/>
    </location>
</feature>
<feature type="disulfide bond" evidence="1">
    <location>
        <begin position="355"/>
        <end position="360"/>
    </location>
</feature>
<feature type="disulfide bond" evidence="1">
    <location>
        <begin position="409"/>
        <end position="438"/>
    </location>
</feature>
<feature type="disulfide bond" evidence="1">
    <location>
        <begin position="420"/>
        <end position="433"/>
    </location>
</feature>
<feature type="disulfide bond" evidence="1">
    <location>
        <begin position="422"/>
        <end position="428"/>
    </location>
</feature>
<feature type="disulfide bond" evidence="1">
    <location>
        <begin position="432"/>
        <end position="455"/>
    </location>
</feature>
<feature type="disulfide bond" evidence="1">
    <location>
        <begin position="446"/>
        <end position="452"/>
    </location>
</feature>
<feature type="disulfide bond" evidence="1">
    <location>
        <begin position="451"/>
        <end position="477"/>
    </location>
</feature>
<feature type="disulfide bond" evidence="1">
    <location>
        <begin position="464"/>
        <end position="484"/>
    </location>
</feature>
<feature type="disulfide bond" evidence="1">
    <location>
        <begin position="471"/>
        <end position="503"/>
    </location>
</feature>
<feature type="disulfide bond" evidence="1">
    <location>
        <begin position="496"/>
        <end position="508"/>
    </location>
</feature>
<feature type="disulfide bond" evidence="1">
    <location>
        <begin position="515"/>
        <end position="565"/>
    </location>
</feature>
<feature type="disulfide bond" evidence="1">
    <location>
        <begin position="530"/>
        <end position="573"/>
    </location>
</feature>
<feature type="disulfide bond" evidence="1">
    <location>
        <begin position="543"/>
        <end position="553"/>
    </location>
</feature>
<feature type="disulfide bond" evidence="1">
    <location>
        <begin position="560"/>
        <end position="599"/>
    </location>
</feature>
<feature type="disulfide bond" evidence="1">
    <location>
        <begin position="593"/>
        <end position="604"/>
    </location>
</feature>
<sequence length="607" mass="68254">MIQALLVIICLAVFPHQGSSIILESGNVNDYEVVYPQKVPALLKGGVQNPQPETKYEDTMRYEFQVNGEPVVLHLERNKGLFSEDYTETHYAPDGREITTSPPVQDHCYYHGYIQNEADSSAVISACNGLKGHFKHQGETYFIEPLELSESEAHAIYKDENVEKEDETPKICAVTQTTWESDESIEKTSQLTNTPEQDRYLQVKKYIEFYLVVDNKMYKNHTSNQELRTRVYEMVNYLNTKYRRLNFHIALIGLEIWSNQDKVDMDPGANVTLKSFAEWRAKLPPHKRNDNAQLLTGIDFNGTTVGLAYTGTLCTWGSVAVVQDYSRRTILMASTMAHELGHNMGIHHDKANCRCSHSPCIMSDTISDEPFYEFSSCSVREHQEYLLRERPQCILNKPSRKAIVSRPVCGNNFVEVGEQCDCGSLQDCQSTCCNATTCKLQPHAQCDSEECCEKCKFKGAETECRAAKDDCDLPEFCTGQSAECPTDSLQRNGHPCQNNQGYCYNGKCPTMENQCITLLGPNYTVGPAGCFKNNRKGDDVSHCRKENGAKIPCAAKDEKCGTLYCTEIKKTGCIVPVSPRDPDSRMVEPGTKCEDKKVCSKSQCVKV</sequence>
<comment type="function">
    <text evidence="1">Snake venom zinc metalloproteinase that inhibits platelet aggregation by cleaving platelet glycoprotein Ib alpha (GP1BA) at Glu-298/Asp-299, and abolishes binding of von Willebrand factor (VWF) to GPIBA.</text>
</comment>
<comment type="cofactor">
    <cofactor evidence="1">
        <name>Zn(2+)</name>
        <dbReference type="ChEBI" id="CHEBI:29105"/>
    </cofactor>
    <text evidence="1">Binds 1 zinc ion per subunit.</text>
</comment>
<comment type="subunit">
    <text evidence="1">Monomer.</text>
</comment>
<comment type="subcellular location">
    <subcellularLocation>
        <location evidence="1">Secreted</location>
    </subcellularLocation>
</comment>
<comment type="tissue specificity">
    <text>Expressed by the venom gland.</text>
</comment>
<comment type="similarity">
    <text evidence="5">Belongs to the venom metalloproteinase (M12B) family. P-III subfamily. P-IIIa sub-subfamily.</text>
</comment>
<accession>D5LMJ3</accession>
<protein>
    <recommendedName>
        <fullName>Zinc metalloproteinase-disintegrin-like atrase-A</fullName>
        <ecNumber>3.4.24.-</ecNumber>
    </recommendedName>
    <alternativeName>
        <fullName>Snake venom metalloproteinase</fullName>
        <shortName>SVMP</shortName>
    </alternativeName>
</protein>
<proteinExistence type="evidence at transcript level"/>
<name>VM3A_NAJAT</name>
<keyword id="KW-0106">Calcium</keyword>
<keyword id="KW-1217">Cell adhesion impairing toxin</keyword>
<keyword id="KW-1015">Disulfide bond</keyword>
<keyword id="KW-0325">Glycoprotein</keyword>
<keyword id="KW-1199">Hemostasis impairing toxin</keyword>
<keyword id="KW-0378">Hydrolase</keyword>
<keyword id="KW-0479">Metal-binding</keyword>
<keyword id="KW-0482">Metalloprotease</keyword>
<keyword id="KW-1201">Platelet aggregation inhibiting toxin</keyword>
<keyword id="KW-0645">Protease</keyword>
<keyword id="KW-0964">Secreted</keyword>
<keyword id="KW-0732">Signal</keyword>
<keyword id="KW-0800">Toxin</keyword>
<keyword id="KW-0862">Zinc</keyword>
<keyword id="KW-0865">Zymogen</keyword>
<evidence type="ECO:0000250" key="1"/>
<evidence type="ECO:0000255" key="2"/>
<evidence type="ECO:0000255" key="3">
    <source>
        <dbReference type="PROSITE-ProRule" id="PRU00068"/>
    </source>
</evidence>
<evidence type="ECO:0000255" key="4">
    <source>
        <dbReference type="PROSITE-ProRule" id="PRU00276"/>
    </source>
</evidence>
<evidence type="ECO:0000305" key="5"/>
<reference key="1">
    <citation type="submission" date="2010-03" db="EMBL/GenBank/DDBJ databases">
        <title>Purification, characterization, and cloning of metalloproteinase from Naja atra venom.</title>
        <authorList>
            <person name="Sun Q.Y."/>
            <person name="Bao J."/>
        </authorList>
    </citation>
    <scope>NUCLEOTIDE SEQUENCE [MRNA]</scope>
    <source>
        <tissue>Venom gland</tissue>
    </source>
</reference>
<organism>
    <name type="scientific">Naja atra</name>
    <name type="common">Chinese cobra</name>
    <dbReference type="NCBI Taxonomy" id="8656"/>
    <lineage>
        <taxon>Eukaryota</taxon>
        <taxon>Metazoa</taxon>
        <taxon>Chordata</taxon>
        <taxon>Craniata</taxon>
        <taxon>Vertebrata</taxon>
        <taxon>Euteleostomi</taxon>
        <taxon>Lepidosauria</taxon>
        <taxon>Squamata</taxon>
        <taxon>Bifurcata</taxon>
        <taxon>Unidentata</taxon>
        <taxon>Episquamata</taxon>
        <taxon>Toxicofera</taxon>
        <taxon>Serpentes</taxon>
        <taxon>Colubroidea</taxon>
        <taxon>Elapidae</taxon>
        <taxon>Elapinae</taxon>
        <taxon>Naja</taxon>
    </lineage>
</organism>
<dbReference type="EC" id="3.4.24.-"/>
<dbReference type="EMBL" id="GU944972">
    <property type="protein sequence ID" value="ADF43026.1"/>
    <property type="molecule type" value="mRNA"/>
</dbReference>
<dbReference type="SMR" id="D5LMJ3"/>
<dbReference type="MEROPS" id="M12.236"/>
<dbReference type="GO" id="GO:0005576">
    <property type="term" value="C:extracellular region"/>
    <property type="evidence" value="ECO:0007669"/>
    <property type="project" value="UniProtKB-SubCell"/>
</dbReference>
<dbReference type="GO" id="GO:0005886">
    <property type="term" value="C:plasma membrane"/>
    <property type="evidence" value="ECO:0007669"/>
    <property type="project" value="TreeGrafter"/>
</dbReference>
<dbReference type="GO" id="GO:0046872">
    <property type="term" value="F:metal ion binding"/>
    <property type="evidence" value="ECO:0007669"/>
    <property type="project" value="UniProtKB-KW"/>
</dbReference>
<dbReference type="GO" id="GO:0004222">
    <property type="term" value="F:metalloendopeptidase activity"/>
    <property type="evidence" value="ECO:0007669"/>
    <property type="project" value="InterPro"/>
</dbReference>
<dbReference type="GO" id="GO:0090729">
    <property type="term" value="F:toxin activity"/>
    <property type="evidence" value="ECO:0007669"/>
    <property type="project" value="UniProtKB-KW"/>
</dbReference>
<dbReference type="GO" id="GO:0006508">
    <property type="term" value="P:proteolysis"/>
    <property type="evidence" value="ECO:0007669"/>
    <property type="project" value="UniProtKB-KW"/>
</dbReference>
<dbReference type="CDD" id="cd04269">
    <property type="entry name" value="ZnMc_adamalysin_II_like"/>
    <property type="match status" value="1"/>
</dbReference>
<dbReference type="FunFam" id="3.40.390.10:FF:000002">
    <property type="entry name" value="Disintegrin and metalloproteinase domain-containing protein 22"/>
    <property type="match status" value="1"/>
</dbReference>
<dbReference type="FunFam" id="4.10.70.10:FF:000001">
    <property type="entry name" value="Disintegrin and metalloproteinase domain-containing protein 22"/>
    <property type="match status" value="1"/>
</dbReference>
<dbReference type="Gene3D" id="3.40.390.10">
    <property type="entry name" value="Collagenase (Catalytic Domain)"/>
    <property type="match status" value="1"/>
</dbReference>
<dbReference type="Gene3D" id="4.10.70.10">
    <property type="entry name" value="Disintegrin domain"/>
    <property type="match status" value="1"/>
</dbReference>
<dbReference type="InterPro" id="IPR006586">
    <property type="entry name" value="ADAM_Cys-rich"/>
</dbReference>
<dbReference type="InterPro" id="IPR001762">
    <property type="entry name" value="Disintegrin_dom"/>
</dbReference>
<dbReference type="InterPro" id="IPR036436">
    <property type="entry name" value="Disintegrin_dom_sf"/>
</dbReference>
<dbReference type="InterPro" id="IPR024079">
    <property type="entry name" value="MetalloPept_cat_dom_sf"/>
</dbReference>
<dbReference type="InterPro" id="IPR001590">
    <property type="entry name" value="Peptidase_M12B"/>
</dbReference>
<dbReference type="InterPro" id="IPR002870">
    <property type="entry name" value="Peptidase_M12B_N"/>
</dbReference>
<dbReference type="InterPro" id="IPR034027">
    <property type="entry name" value="Reprolysin_adamalysin"/>
</dbReference>
<dbReference type="PANTHER" id="PTHR11905">
    <property type="entry name" value="ADAM A DISINTEGRIN AND METALLOPROTEASE DOMAIN"/>
    <property type="match status" value="1"/>
</dbReference>
<dbReference type="PANTHER" id="PTHR11905:SF32">
    <property type="entry name" value="DISINTEGRIN AND METALLOPROTEINASE DOMAIN-CONTAINING PROTEIN 28"/>
    <property type="match status" value="1"/>
</dbReference>
<dbReference type="Pfam" id="PF08516">
    <property type="entry name" value="ADAM_CR"/>
    <property type="match status" value="1"/>
</dbReference>
<dbReference type="Pfam" id="PF00200">
    <property type="entry name" value="Disintegrin"/>
    <property type="match status" value="1"/>
</dbReference>
<dbReference type="Pfam" id="PF01562">
    <property type="entry name" value="Pep_M12B_propep"/>
    <property type="match status" value="1"/>
</dbReference>
<dbReference type="Pfam" id="PF01421">
    <property type="entry name" value="Reprolysin"/>
    <property type="match status" value="1"/>
</dbReference>
<dbReference type="PRINTS" id="PR00289">
    <property type="entry name" value="DISINTEGRIN"/>
</dbReference>
<dbReference type="SMART" id="SM00608">
    <property type="entry name" value="ACR"/>
    <property type="match status" value="1"/>
</dbReference>
<dbReference type="SMART" id="SM00050">
    <property type="entry name" value="DISIN"/>
    <property type="match status" value="1"/>
</dbReference>
<dbReference type="SUPFAM" id="SSF57552">
    <property type="entry name" value="Blood coagulation inhibitor (disintegrin)"/>
    <property type="match status" value="1"/>
</dbReference>
<dbReference type="SUPFAM" id="SSF55486">
    <property type="entry name" value="Metalloproteases ('zincins'), catalytic domain"/>
    <property type="match status" value="1"/>
</dbReference>
<dbReference type="PROSITE" id="PS50215">
    <property type="entry name" value="ADAM_MEPRO"/>
    <property type="match status" value="1"/>
</dbReference>
<dbReference type="PROSITE" id="PS50214">
    <property type="entry name" value="DISINTEGRIN_2"/>
    <property type="match status" value="1"/>
</dbReference>
<dbReference type="PROSITE" id="PS00142">
    <property type="entry name" value="ZINC_PROTEASE"/>
    <property type="match status" value="1"/>
</dbReference>